<evidence type="ECO:0000255" key="1">
    <source>
        <dbReference type="HAMAP-Rule" id="MF_00117"/>
    </source>
</evidence>
<feature type="chain" id="PRO_1000119260" description="33 kDa chaperonin">
    <location>
        <begin position="1"/>
        <end position="292"/>
    </location>
</feature>
<feature type="disulfide bond" description="Redox-active" evidence="1">
    <location>
        <begin position="230"/>
        <end position="232"/>
    </location>
</feature>
<feature type="disulfide bond" description="Redox-active" evidence="1">
    <location>
        <begin position="263"/>
        <end position="266"/>
    </location>
</feature>
<accession>B7N133</accession>
<name>HSLO_ECO81</name>
<protein>
    <recommendedName>
        <fullName evidence="1">33 kDa chaperonin</fullName>
    </recommendedName>
    <alternativeName>
        <fullName evidence="1">Heat shock protein 33 homolog</fullName>
        <shortName evidence="1">HSP33</shortName>
    </alternativeName>
</protein>
<organism>
    <name type="scientific">Escherichia coli O81 (strain ED1a)</name>
    <dbReference type="NCBI Taxonomy" id="585397"/>
    <lineage>
        <taxon>Bacteria</taxon>
        <taxon>Pseudomonadati</taxon>
        <taxon>Pseudomonadota</taxon>
        <taxon>Gammaproteobacteria</taxon>
        <taxon>Enterobacterales</taxon>
        <taxon>Enterobacteriaceae</taxon>
        <taxon>Escherichia</taxon>
    </lineage>
</organism>
<comment type="function">
    <text evidence="1">Redox regulated molecular chaperone. Protects both thermally unfolding and oxidatively damaged proteins from irreversible aggregation. Plays an important role in the bacterial defense system toward oxidative stress.</text>
</comment>
<comment type="subcellular location">
    <subcellularLocation>
        <location evidence="1">Cytoplasm</location>
    </subcellularLocation>
</comment>
<comment type="PTM">
    <text evidence="1">Under oxidizing conditions two disulfide bonds are formed involving the reactive cysteines. Under reducing conditions zinc is bound to the reactive cysteines and the protein is inactive.</text>
</comment>
<comment type="similarity">
    <text evidence="1">Belongs to the HSP33 family.</text>
</comment>
<keyword id="KW-0143">Chaperone</keyword>
<keyword id="KW-0963">Cytoplasm</keyword>
<keyword id="KW-1015">Disulfide bond</keyword>
<keyword id="KW-0676">Redox-active center</keyword>
<keyword id="KW-0346">Stress response</keyword>
<keyword id="KW-0862">Zinc</keyword>
<dbReference type="EMBL" id="CU928162">
    <property type="protein sequence ID" value="CAR10051.1"/>
    <property type="molecule type" value="Genomic_DNA"/>
</dbReference>
<dbReference type="RefSeq" id="WP_001135574.1">
    <property type="nucleotide sequence ID" value="NC_011745.1"/>
</dbReference>
<dbReference type="SMR" id="B7N133"/>
<dbReference type="GeneID" id="93778597"/>
<dbReference type="KEGG" id="ecq:ECED1_4060"/>
<dbReference type="HOGENOM" id="CLU_054493_0_0_6"/>
<dbReference type="Proteomes" id="UP000000748">
    <property type="component" value="Chromosome"/>
</dbReference>
<dbReference type="GO" id="GO:0005737">
    <property type="term" value="C:cytoplasm"/>
    <property type="evidence" value="ECO:0007669"/>
    <property type="project" value="UniProtKB-SubCell"/>
</dbReference>
<dbReference type="GO" id="GO:0044183">
    <property type="term" value="F:protein folding chaperone"/>
    <property type="evidence" value="ECO:0007669"/>
    <property type="project" value="TreeGrafter"/>
</dbReference>
<dbReference type="GO" id="GO:0051082">
    <property type="term" value="F:unfolded protein binding"/>
    <property type="evidence" value="ECO:0007669"/>
    <property type="project" value="UniProtKB-UniRule"/>
</dbReference>
<dbReference type="GO" id="GO:0042026">
    <property type="term" value="P:protein refolding"/>
    <property type="evidence" value="ECO:0007669"/>
    <property type="project" value="TreeGrafter"/>
</dbReference>
<dbReference type="CDD" id="cd00498">
    <property type="entry name" value="Hsp33"/>
    <property type="match status" value="1"/>
</dbReference>
<dbReference type="FunFam" id="3.55.30.10:FF:000001">
    <property type="entry name" value="33 kDa chaperonin"/>
    <property type="match status" value="1"/>
</dbReference>
<dbReference type="Gene3D" id="1.10.287.480">
    <property type="entry name" value="helix hairpin bin"/>
    <property type="match status" value="1"/>
</dbReference>
<dbReference type="Gene3D" id="3.55.30.10">
    <property type="entry name" value="Hsp33 domain"/>
    <property type="match status" value="1"/>
</dbReference>
<dbReference type="Gene3D" id="3.90.1280.10">
    <property type="entry name" value="HSP33 redox switch-like"/>
    <property type="match status" value="1"/>
</dbReference>
<dbReference type="HAMAP" id="MF_00117">
    <property type="entry name" value="HslO"/>
    <property type="match status" value="1"/>
</dbReference>
<dbReference type="InterPro" id="IPR000397">
    <property type="entry name" value="Heat_shock_Hsp33"/>
</dbReference>
<dbReference type="InterPro" id="IPR016154">
    <property type="entry name" value="Heat_shock_Hsp33_C"/>
</dbReference>
<dbReference type="InterPro" id="IPR016153">
    <property type="entry name" value="Heat_shock_Hsp33_N"/>
</dbReference>
<dbReference type="InterPro" id="IPR023212">
    <property type="entry name" value="Hsp33_helix_hairpin_bin_dom_sf"/>
</dbReference>
<dbReference type="NCBIfam" id="NF001033">
    <property type="entry name" value="PRK00114.1"/>
    <property type="match status" value="1"/>
</dbReference>
<dbReference type="PANTHER" id="PTHR30111">
    <property type="entry name" value="33 KDA CHAPERONIN"/>
    <property type="match status" value="1"/>
</dbReference>
<dbReference type="PANTHER" id="PTHR30111:SF1">
    <property type="entry name" value="33 KDA CHAPERONIN"/>
    <property type="match status" value="1"/>
</dbReference>
<dbReference type="Pfam" id="PF01430">
    <property type="entry name" value="HSP33"/>
    <property type="match status" value="1"/>
</dbReference>
<dbReference type="PIRSF" id="PIRSF005261">
    <property type="entry name" value="Heat_shock_Hsp33"/>
    <property type="match status" value="1"/>
</dbReference>
<dbReference type="SUPFAM" id="SSF64397">
    <property type="entry name" value="Hsp33 domain"/>
    <property type="match status" value="1"/>
</dbReference>
<dbReference type="SUPFAM" id="SSF118352">
    <property type="entry name" value="HSP33 redox switch-like"/>
    <property type="match status" value="1"/>
</dbReference>
<gene>
    <name evidence="1" type="primary">hslO</name>
    <name type="ordered locus">ECED1_4060</name>
</gene>
<proteinExistence type="inferred from homology"/>
<reference key="1">
    <citation type="journal article" date="2009" name="PLoS Genet.">
        <title>Organised genome dynamics in the Escherichia coli species results in highly diverse adaptive paths.</title>
        <authorList>
            <person name="Touchon M."/>
            <person name="Hoede C."/>
            <person name="Tenaillon O."/>
            <person name="Barbe V."/>
            <person name="Baeriswyl S."/>
            <person name="Bidet P."/>
            <person name="Bingen E."/>
            <person name="Bonacorsi S."/>
            <person name="Bouchier C."/>
            <person name="Bouvet O."/>
            <person name="Calteau A."/>
            <person name="Chiapello H."/>
            <person name="Clermont O."/>
            <person name="Cruveiller S."/>
            <person name="Danchin A."/>
            <person name="Diard M."/>
            <person name="Dossat C."/>
            <person name="Karoui M.E."/>
            <person name="Frapy E."/>
            <person name="Garry L."/>
            <person name="Ghigo J.M."/>
            <person name="Gilles A.M."/>
            <person name="Johnson J."/>
            <person name="Le Bouguenec C."/>
            <person name="Lescat M."/>
            <person name="Mangenot S."/>
            <person name="Martinez-Jehanne V."/>
            <person name="Matic I."/>
            <person name="Nassif X."/>
            <person name="Oztas S."/>
            <person name="Petit M.A."/>
            <person name="Pichon C."/>
            <person name="Rouy Z."/>
            <person name="Ruf C.S."/>
            <person name="Schneider D."/>
            <person name="Tourret J."/>
            <person name="Vacherie B."/>
            <person name="Vallenet D."/>
            <person name="Medigue C."/>
            <person name="Rocha E.P.C."/>
            <person name="Denamur E."/>
        </authorList>
    </citation>
    <scope>NUCLEOTIDE SEQUENCE [LARGE SCALE GENOMIC DNA]</scope>
    <source>
        <strain>ED1a</strain>
    </source>
</reference>
<sequence length="292" mass="32534">MPQHDQLHRYLFENFAVRGELVTVSETLQQILENHDYPQPVKNVLAELLVATSLLTATLKFDGDITVQLQGDGPMNLAVINGNNNQQMRGVARVQGEIPENADLKTLVGNGYVVITITPSEGERYQGVVGLEGDTLAACLEDYFMRSEQLPTRLFIRTGDVDGKPAAGGMLLQVMPAQNAQQDDFDHLATLTETIKTEELLTLPANEVLWRLYHEEEVTVYDPQDVEFKCTCSRERCADALKTLPDEEVDSILAEDGEIDMHCDYCGNHYLFNAMDIAEIRNNASPADPQVH</sequence>